<protein>
    <recommendedName>
        <fullName>LOB domain-containing protein 22</fullName>
    </recommendedName>
    <alternativeName>
        <fullName>ASYMMETRIC LEAVES 2-like protein 30</fullName>
        <shortName>AS2-like protein 30</shortName>
    </alternativeName>
</protein>
<sequence length="268" mass="30567">MPSGKPSSVFPLHPKPTPLKPSSSTSSSNNNSTNQACAACKYQRRKCAPDCLLAPYFPHDRHRQFLNAHKLFGVSNITKIIKSLTPPEKDAAMHTIMFQSDARANDPVDGCYGIIKKLQYQIEYTRNELEIVLQQLAMFRDRAHQHHHQEPHIQMQEQEDLSSFSSSCDLNNNNSIPYNYPLNHIQEPNQQQYCSSGNNFSGLQEDMWCLQLQDSSTIVNMKAGFIDECEDVKPVEEVSSERHEFEPHEAFVEQRKLDLPSAQYIISS</sequence>
<feature type="chain" id="PRO_0000132273" description="LOB domain-containing protein 22">
    <location>
        <begin position="1"/>
        <end position="268"/>
    </location>
</feature>
<feature type="domain" description="LOB" evidence="1">
    <location>
        <begin position="35"/>
        <end position="136"/>
    </location>
</feature>
<feature type="region of interest" description="Disordered" evidence="2">
    <location>
        <begin position="1"/>
        <end position="31"/>
    </location>
</feature>
<feature type="compositionally biased region" description="Low complexity" evidence="2">
    <location>
        <begin position="22"/>
        <end position="31"/>
    </location>
</feature>
<gene>
    <name type="primary">LBD22</name>
    <name type="synonym">ASL30</name>
    <name type="ordered locus">At3g13850</name>
    <name type="ORF">MCP4.8</name>
</gene>
<evidence type="ECO:0000255" key="1">
    <source>
        <dbReference type="PROSITE-ProRule" id="PRU00291"/>
    </source>
</evidence>
<evidence type="ECO:0000256" key="2">
    <source>
        <dbReference type="SAM" id="MobiDB-lite"/>
    </source>
</evidence>
<evidence type="ECO:0000305" key="3"/>
<name>LBD22_ARATH</name>
<comment type="similarity">
    <text evidence="3">Belongs to the LOB domain-containing protein family.</text>
</comment>
<organism>
    <name type="scientific">Arabidopsis thaliana</name>
    <name type="common">Mouse-ear cress</name>
    <dbReference type="NCBI Taxonomy" id="3702"/>
    <lineage>
        <taxon>Eukaryota</taxon>
        <taxon>Viridiplantae</taxon>
        <taxon>Streptophyta</taxon>
        <taxon>Embryophyta</taxon>
        <taxon>Tracheophyta</taxon>
        <taxon>Spermatophyta</taxon>
        <taxon>Magnoliopsida</taxon>
        <taxon>eudicotyledons</taxon>
        <taxon>Gunneridae</taxon>
        <taxon>Pentapetalae</taxon>
        <taxon>rosids</taxon>
        <taxon>malvids</taxon>
        <taxon>Brassicales</taxon>
        <taxon>Brassicaceae</taxon>
        <taxon>Camelineae</taxon>
        <taxon>Arabidopsis</taxon>
    </lineage>
</organism>
<proteinExistence type="evidence at transcript level"/>
<dbReference type="EMBL" id="AB473863">
    <property type="protein sequence ID" value="BAH10574.1"/>
    <property type="molecule type" value="mRNA"/>
</dbReference>
<dbReference type="EMBL" id="AB028610">
    <property type="protein sequence ID" value="BAB02910.1"/>
    <property type="molecule type" value="Genomic_DNA"/>
</dbReference>
<dbReference type="EMBL" id="CP002686">
    <property type="protein sequence ID" value="AEE75425.1"/>
    <property type="molecule type" value="Genomic_DNA"/>
</dbReference>
<dbReference type="RefSeq" id="NP_188001.1">
    <property type="nucleotide sequence ID" value="NM_112239.4"/>
</dbReference>
<dbReference type="SMR" id="Q9LRW1"/>
<dbReference type="BioGRID" id="5932">
    <property type="interactions" value="1"/>
</dbReference>
<dbReference type="STRING" id="3702.Q9LRW1"/>
<dbReference type="PaxDb" id="3702-AT3G13850.1"/>
<dbReference type="ProteomicsDB" id="250721"/>
<dbReference type="EnsemblPlants" id="AT3G13850.1">
    <property type="protein sequence ID" value="AT3G13850.1"/>
    <property type="gene ID" value="AT3G13850"/>
</dbReference>
<dbReference type="GeneID" id="820598"/>
<dbReference type="Gramene" id="AT3G13850.1">
    <property type="protein sequence ID" value="AT3G13850.1"/>
    <property type="gene ID" value="AT3G13850"/>
</dbReference>
<dbReference type="KEGG" id="ath:AT3G13850"/>
<dbReference type="Araport" id="AT3G13850"/>
<dbReference type="TAIR" id="AT3G13850">
    <property type="gene designation" value="LBD22"/>
</dbReference>
<dbReference type="eggNOG" id="ENOG502RY2U">
    <property type="taxonomic scope" value="Eukaryota"/>
</dbReference>
<dbReference type="HOGENOM" id="CLU_073711_2_0_1"/>
<dbReference type="InParanoid" id="Q9LRW1"/>
<dbReference type="OMA" id="QEPHIQM"/>
<dbReference type="PhylomeDB" id="Q9LRW1"/>
<dbReference type="PRO" id="PR:Q9LRW1"/>
<dbReference type="Proteomes" id="UP000006548">
    <property type="component" value="Chromosome 3"/>
</dbReference>
<dbReference type="ExpressionAtlas" id="Q9LRW1">
    <property type="expression patterns" value="baseline and differential"/>
</dbReference>
<dbReference type="InterPro" id="IPR004883">
    <property type="entry name" value="LOB"/>
</dbReference>
<dbReference type="PANTHER" id="PTHR31301:SF67">
    <property type="entry name" value="LOB DOMAIN-CONTAINING PROTEIN 22"/>
    <property type="match status" value="1"/>
</dbReference>
<dbReference type="PANTHER" id="PTHR31301">
    <property type="entry name" value="LOB DOMAIN-CONTAINING PROTEIN 4-RELATED"/>
    <property type="match status" value="1"/>
</dbReference>
<dbReference type="Pfam" id="PF03195">
    <property type="entry name" value="LOB"/>
    <property type="match status" value="1"/>
</dbReference>
<dbReference type="PROSITE" id="PS50891">
    <property type="entry name" value="LOB"/>
    <property type="match status" value="1"/>
</dbReference>
<accession>Q9LRW1</accession>
<accession>B7XG84</accession>
<reference key="1">
    <citation type="journal article" date="2009" name="Plant J.">
        <title>Characterization of genes in the ASYMMETRIC LEAVES2/LATERAL ORGAN BOUNDARIES (AS2/LOB) family in Arabidopsis thaliana, and functional and molecular comparisons between AS2 and other family members.</title>
        <authorList>
            <person name="Matsumura Y."/>
            <person name="Iwakawa H."/>
            <person name="Machida Y."/>
            <person name="Machida C."/>
        </authorList>
    </citation>
    <scope>NUCLEOTIDE SEQUENCE [MRNA]</scope>
    <source>
        <strain>cv. Columbia</strain>
    </source>
</reference>
<reference key="2">
    <citation type="journal article" date="2000" name="DNA Res.">
        <title>Structural analysis of Arabidopsis thaliana chromosome 3. I. Sequence features of the regions of 4,504,864 bp covered by sixty P1 and TAC clones.</title>
        <authorList>
            <person name="Sato S."/>
            <person name="Nakamura Y."/>
            <person name="Kaneko T."/>
            <person name="Katoh T."/>
            <person name="Asamizu E."/>
            <person name="Tabata S."/>
        </authorList>
    </citation>
    <scope>NUCLEOTIDE SEQUENCE [LARGE SCALE GENOMIC DNA]</scope>
    <source>
        <strain>cv. Columbia</strain>
    </source>
</reference>
<reference key="3">
    <citation type="journal article" date="2017" name="Plant J.">
        <title>Araport11: a complete reannotation of the Arabidopsis thaliana reference genome.</title>
        <authorList>
            <person name="Cheng C.Y."/>
            <person name="Krishnakumar V."/>
            <person name="Chan A.P."/>
            <person name="Thibaud-Nissen F."/>
            <person name="Schobel S."/>
            <person name="Town C.D."/>
        </authorList>
    </citation>
    <scope>GENOME REANNOTATION</scope>
    <source>
        <strain>cv. Columbia</strain>
    </source>
</reference>
<reference key="4">
    <citation type="journal article" date="2002" name="Plant Physiol.">
        <title>The LATERAL ORGAN BOUNDARIES gene defines a novel, plant-specific gene family.</title>
        <authorList>
            <person name="Shuai B."/>
            <person name="Reynaga-Pena C.G."/>
            <person name="Springer P.S."/>
        </authorList>
    </citation>
    <scope>GENE FAMILY</scope>
    <scope>NOMENCLATURE</scope>
</reference>
<reference key="5">
    <citation type="journal article" date="2002" name="Plant Cell Physiol.">
        <title>The ASYMMETRIC LEAVES2 gene of Arabidopsis thaliana, required for formation of a symmetric flat leaf lamina, encodes a member of a novel family of proteins characterized by cysteine repeats and a leucine zipper.</title>
        <authorList>
            <person name="Iwakawa H."/>
            <person name="Ueno Y."/>
            <person name="Semiarti E."/>
            <person name="Onouchi H."/>
            <person name="Kojima S."/>
            <person name="Tsukaya H."/>
            <person name="Hasebe M."/>
            <person name="Soma T."/>
            <person name="Ikezaki M."/>
            <person name="Machida C."/>
            <person name="Machida Y."/>
        </authorList>
    </citation>
    <scope>GENE FAMILY</scope>
    <scope>NOMENCLATURE</scope>
</reference>
<keyword id="KW-1185">Reference proteome</keyword>